<dbReference type="EMBL" id="BX571856">
    <property type="protein sequence ID" value="CAG39886.1"/>
    <property type="molecule type" value="Genomic_DNA"/>
</dbReference>
<dbReference type="SMR" id="Q6GIH0"/>
<dbReference type="KEGG" id="sar:SAR0880"/>
<dbReference type="HOGENOM" id="CLU_026231_0_1_9"/>
<dbReference type="Proteomes" id="UP000000596">
    <property type="component" value="Chromosome"/>
</dbReference>
<dbReference type="GO" id="GO:0016226">
    <property type="term" value="P:iron-sulfur cluster assembly"/>
    <property type="evidence" value="ECO:0007669"/>
    <property type="project" value="InterPro"/>
</dbReference>
<dbReference type="InterPro" id="IPR055346">
    <property type="entry name" value="Fe-S_cluster_assembly_SufBD"/>
</dbReference>
<dbReference type="InterPro" id="IPR010231">
    <property type="entry name" value="SUF_FeS_clus_asmbl_SufB"/>
</dbReference>
<dbReference type="InterPro" id="IPR000825">
    <property type="entry name" value="SUF_FeS_clus_asmbl_SufBD_core"/>
</dbReference>
<dbReference type="InterPro" id="IPR037284">
    <property type="entry name" value="SUF_FeS_clus_asmbl_SufBD_sf"/>
</dbReference>
<dbReference type="InterPro" id="IPR045595">
    <property type="entry name" value="SufBD_N"/>
</dbReference>
<dbReference type="NCBIfam" id="TIGR01980">
    <property type="entry name" value="sufB"/>
    <property type="match status" value="1"/>
</dbReference>
<dbReference type="PANTHER" id="PTHR30508">
    <property type="entry name" value="FES CLUSTER ASSEMBLY PROTEIN SUF"/>
    <property type="match status" value="1"/>
</dbReference>
<dbReference type="PANTHER" id="PTHR30508:SF1">
    <property type="entry name" value="UPF0051 PROTEIN ABCI8, CHLOROPLASTIC-RELATED"/>
    <property type="match status" value="1"/>
</dbReference>
<dbReference type="Pfam" id="PF01458">
    <property type="entry name" value="SUFBD_core"/>
    <property type="match status" value="1"/>
</dbReference>
<dbReference type="Pfam" id="PF19295">
    <property type="entry name" value="SufBD_N"/>
    <property type="match status" value="1"/>
</dbReference>
<dbReference type="SUPFAM" id="SSF101960">
    <property type="entry name" value="Stabilizer of iron transporter SufD"/>
    <property type="match status" value="1"/>
</dbReference>
<organism>
    <name type="scientific">Staphylococcus aureus (strain MRSA252)</name>
    <dbReference type="NCBI Taxonomy" id="282458"/>
    <lineage>
        <taxon>Bacteria</taxon>
        <taxon>Bacillati</taxon>
        <taxon>Bacillota</taxon>
        <taxon>Bacilli</taxon>
        <taxon>Bacillales</taxon>
        <taxon>Staphylococcaceae</taxon>
        <taxon>Staphylococcus</taxon>
    </lineage>
</organism>
<evidence type="ECO:0000305" key="1"/>
<comment type="similarity">
    <text evidence="1">Belongs to the iron-sulfur cluster assembly SufBD family.</text>
</comment>
<accession>Q6GIH0</accession>
<proteinExistence type="inferred from homology"/>
<gene>
    <name type="ordered locus">SAR0880</name>
</gene>
<feature type="chain" id="PRO_0000298952" description="Iron-sulfur cluster assembly SufBD family protein SAR0880">
    <location>
        <begin position="1"/>
        <end position="465"/>
    </location>
</feature>
<sequence>MAKKAPDVGDYKYGFHDDDVSIFRSERGLTENIVREISNMKNEPEWMLDFRLKSLKLFYKMPMPQWGGDLSELNFDDITYYVKPSEQAERSWDEVPEEIKRTFDKLGIPEAEQKYLAGVSAQYESEVVYHNMEKELEEKGIIFKDTDSALQENEELFKKYFASVVPAADNKFAALNSAVWSGGSFIYVPKNIKLDTPLQAYFRINSENMGQFERTLIIADEGASVHYIEGCTAPVYTTSSLHSAVVEIIVHKDAHVRYTTIQNWANNVYNLVTKRTFVYENGNMEWVDGNLGSKLTMKYPNCVLLGEGAKGSTLSIAFAGKGQVQDAGAKMIHKAPNTSSTIVSKSISKNGGKVIYRGIVHFGRKAKGARSNIECDTLILDNESTSDTIPYNEVFNDQISLEHEAKVSKVSEEQLFYLMSRGISEEEATEMIVMGFIEPFTKELPMEYAVEMNRLIKFEMEGSIG</sequence>
<name>Y880_STAAR</name>
<reference key="1">
    <citation type="journal article" date="2004" name="Proc. Natl. Acad. Sci. U.S.A.">
        <title>Complete genomes of two clinical Staphylococcus aureus strains: evidence for the rapid evolution of virulence and drug resistance.</title>
        <authorList>
            <person name="Holden M.T.G."/>
            <person name="Feil E.J."/>
            <person name="Lindsay J.A."/>
            <person name="Peacock S.J."/>
            <person name="Day N.P.J."/>
            <person name="Enright M.C."/>
            <person name="Foster T.J."/>
            <person name="Moore C.E."/>
            <person name="Hurst L."/>
            <person name="Atkin R."/>
            <person name="Barron A."/>
            <person name="Bason N."/>
            <person name="Bentley S.D."/>
            <person name="Chillingworth C."/>
            <person name="Chillingworth T."/>
            <person name="Churcher C."/>
            <person name="Clark L."/>
            <person name="Corton C."/>
            <person name="Cronin A."/>
            <person name="Doggett J."/>
            <person name="Dowd L."/>
            <person name="Feltwell T."/>
            <person name="Hance Z."/>
            <person name="Harris B."/>
            <person name="Hauser H."/>
            <person name="Holroyd S."/>
            <person name="Jagels K."/>
            <person name="James K.D."/>
            <person name="Lennard N."/>
            <person name="Line A."/>
            <person name="Mayes R."/>
            <person name="Moule S."/>
            <person name="Mungall K."/>
            <person name="Ormond D."/>
            <person name="Quail M.A."/>
            <person name="Rabbinowitsch E."/>
            <person name="Rutherford K.M."/>
            <person name="Sanders M."/>
            <person name="Sharp S."/>
            <person name="Simmonds M."/>
            <person name="Stevens K."/>
            <person name="Whitehead S."/>
            <person name="Barrell B.G."/>
            <person name="Spratt B.G."/>
            <person name="Parkhill J."/>
        </authorList>
    </citation>
    <scope>NUCLEOTIDE SEQUENCE [LARGE SCALE GENOMIC DNA]</scope>
    <source>
        <strain>MRSA252</strain>
    </source>
</reference>
<protein>
    <recommendedName>
        <fullName>Iron-sulfur cluster assembly SufBD family protein SAR0880</fullName>
    </recommendedName>
</protein>